<feature type="chain" id="PRO_1000012924" description="Lysine--tRNA ligase">
    <location>
        <begin position="1"/>
        <end position="500"/>
    </location>
</feature>
<feature type="binding site" evidence="1">
    <location>
        <position position="410"/>
    </location>
    <ligand>
        <name>Mg(2+)</name>
        <dbReference type="ChEBI" id="CHEBI:18420"/>
        <label>1</label>
    </ligand>
</feature>
<feature type="binding site" evidence="1">
    <location>
        <position position="417"/>
    </location>
    <ligand>
        <name>Mg(2+)</name>
        <dbReference type="ChEBI" id="CHEBI:18420"/>
        <label>1</label>
    </ligand>
</feature>
<feature type="binding site" evidence="1">
    <location>
        <position position="417"/>
    </location>
    <ligand>
        <name>Mg(2+)</name>
        <dbReference type="ChEBI" id="CHEBI:18420"/>
        <label>2</label>
    </ligand>
</feature>
<keyword id="KW-0030">Aminoacyl-tRNA synthetase</keyword>
<keyword id="KW-0067">ATP-binding</keyword>
<keyword id="KW-0963">Cytoplasm</keyword>
<keyword id="KW-0436">Ligase</keyword>
<keyword id="KW-0460">Magnesium</keyword>
<keyword id="KW-0479">Metal-binding</keyword>
<keyword id="KW-0547">Nucleotide-binding</keyword>
<keyword id="KW-0648">Protein biosynthesis</keyword>
<keyword id="KW-1185">Reference proteome</keyword>
<proteinExistence type="inferred from homology"/>
<comment type="catalytic activity">
    <reaction evidence="1">
        <text>tRNA(Lys) + L-lysine + ATP = L-lysyl-tRNA(Lys) + AMP + diphosphate</text>
        <dbReference type="Rhea" id="RHEA:20792"/>
        <dbReference type="Rhea" id="RHEA-COMP:9696"/>
        <dbReference type="Rhea" id="RHEA-COMP:9697"/>
        <dbReference type="ChEBI" id="CHEBI:30616"/>
        <dbReference type="ChEBI" id="CHEBI:32551"/>
        <dbReference type="ChEBI" id="CHEBI:33019"/>
        <dbReference type="ChEBI" id="CHEBI:78442"/>
        <dbReference type="ChEBI" id="CHEBI:78529"/>
        <dbReference type="ChEBI" id="CHEBI:456215"/>
        <dbReference type="EC" id="6.1.1.6"/>
    </reaction>
</comment>
<comment type="cofactor">
    <cofactor evidence="1">
        <name>Mg(2+)</name>
        <dbReference type="ChEBI" id="CHEBI:18420"/>
    </cofactor>
    <text evidence="1">Binds 3 Mg(2+) ions per subunit.</text>
</comment>
<comment type="subunit">
    <text evidence="1">Homodimer.</text>
</comment>
<comment type="subcellular location">
    <subcellularLocation>
        <location evidence="1">Cytoplasm</location>
    </subcellularLocation>
</comment>
<comment type="similarity">
    <text evidence="1">Belongs to the class-II aminoacyl-tRNA synthetase family.</text>
</comment>
<organism>
    <name type="scientific">Shewanella amazonensis (strain ATCC BAA-1098 / SB2B)</name>
    <dbReference type="NCBI Taxonomy" id="326297"/>
    <lineage>
        <taxon>Bacteria</taxon>
        <taxon>Pseudomonadati</taxon>
        <taxon>Pseudomonadota</taxon>
        <taxon>Gammaproteobacteria</taxon>
        <taxon>Alteromonadales</taxon>
        <taxon>Shewanellaceae</taxon>
        <taxon>Shewanella</taxon>
    </lineage>
</organism>
<evidence type="ECO:0000255" key="1">
    <source>
        <dbReference type="HAMAP-Rule" id="MF_00252"/>
    </source>
</evidence>
<reference key="1">
    <citation type="submission" date="2006-12" db="EMBL/GenBank/DDBJ databases">
        <title>Complete sequence of Shewanella amazonensis SB2B.</title>
        <authorList>
            <consortium name="US DOE Joint Genome Institute"/>
            <person name="Copeland A."/>
            <person name="Lucas S."/>
            <person name="Lapidus A."/>
            <person name="Barry K."/>
            <person name="Detter J.C."/>
            <person name="Glavina del Rio T."/>
            <person name="Hammon N."/>
            <person name="Israni S."/>
            <person name="Dalin E."/>
            <person name="Tice H."/>
            <person name="Pitluck S."/>
            <person name="Munk A.C."/>
            <person name="Brettin T."/>
            <person name="Bruce D."/>
            <person name="Han C."/>
            <person name="Tapia R."/>
            <person name="Gilna P."/>
            <person name="Schmutz J."/>
            <person name="Larimer F."/>
            <person name="Land M."/>
            <person name="Hauser L."/>
            <person name="Kyrpides N."/>
            <person name="Mikhailova N."/>
            <person name="Fredrickson J."/>
            <person name="Richardson P."/>
        </authorList>
    </citation>
    <scope>NUCLEOTIDE SEQUENCE [LARGE SCALE GENOMIC DNA]</scope>
    <source>
        <strain>ATCC BAA-1098 / SB2B</strain>
    </source>
</reference>
<sequence>MTEHIQDENKLIAERRAKLEHVRKNCPANGHPNTFRRKHKAAELQAQFGDKTKEELEALGFQTAIAGRVMAKRGPFLVLQDVSGRIQAYADKGVQADLKDRYAGLDIGDIIGVEGTLHLSGKGDLYVNMERYELLTKALRPLPEKFHGLTDQETRYRQRYVDLIVNEDSREAFKMRSKVVAAIRNFMIKKEFMEVETPMMHVIPGGASARPFVTHHNALDIEMYLRIAPELYLKRLVVGGFERVFEINRNFRNEGLSPRHNPEFTMMEFYMAYADYKDLIDLTEEMLSSIAKELLGDTKLPYGEHVIDFGGPYTRMSMLEAIKHYNPDNATIQAMTYEEVKNIDFMRKLAKDVGIETETFWSCGQLLEEIFGETAEPKLMQPTFITGYPADISPLARRSDGNDFITDRFEFFIGGREVANGFSELNDAEDQDNRFKAQVEAKDAGDDEAMFYDADFITALEHGLPPTAGQGIGIDRLVMLFTNTHTIRDVILFPAMRPQA</sequence>
<gene>
    <name evidence="1" type="primary">lysS</name>
    <name type="ordered locus">Sama_2877</name>
</gene>
<accession>A1S9M3</accession>
<dbReference type="EC" id="6.1.1.6" evidence="1"/>
<dbReference type="EMBL" id="CP000507">
    <property type="protein sequence ID" value="ABM01080.1"/>
    <property type="molecule type" value="Genomic_DNA"/>
</dbReference>
<dbReference type="RefSeq" id="WP_011760985.1">
    <property type="nucleotide sequence ID" value="NC_008700.1"/>
</dbReference>
<dbReference type="SMR" id="A1S9M3"/>
<dbReference type="STRING" id="326297.Sama_2877"/>
<dbReference type="KEGG" id="saz:Sama_2877"/>
<dbReference type="eggNOG" id="COG1190">
    <property type="taxonomic scope" value="Bacteria"/>
</dbReference>
<dbReference type="HOGENOM" id="CLU_008255_6_0_6"/>
<dbReference type="OrthoDB" id="9802326at2"/>
<dbReference type="Proteomes" id="UP000009175">
    <property type="component" value="Chromosome"/>
</dbReference>
<dbReference type="GO" id="GO:0005829">
    <property type="term" value="C:cytosol"/>
    <property type="evidence" value="ECO:0007669"/>
    <property type="project" value="TreeGrafter"/>
</dbReference>
<dbReference type="GO" id="GO:0005524">
    <property type="term" value="F:ATP binding"/>
    <property type="evidence" value="ECO:0007669"/>
    <property type="project" value="UniProtKB-UniRule"/>
</dbReference>
<dbReference type="GO" id="GO:0004824">
    <property type="term" value="F:lysine-tRNA ligase activity"/>
    <property type="evidence" value="ECO:0007669"/>
    <property type="project" value="UniProtKB-UniRule"/>
</dbReference>
<dbReference type="GO" id="GO:0000287">
    <property type="term" value="F:magnesium ion binding"/>
    <property type="evidence" value="ECO:0007669"/>
    <property type="project" value="UniProtKB-UniRule"/>
</dbReference>
<dbReference type="GO" id="GO:0000049">
    <property type="term" value="F:tRNA binding"/>
    <property type="evidence" value="ECO:0007669"/>
    <property type="project" value="TreeGrafter"/>
</dbReference>
<dbReference type="GO" id="GO:0006430">
    <property type="term" value="P:lysyl-tRNA aminoacylation"/>
    <property type="evidence" value="ECO:0007669"/>
    <property type="project" value="UniProtKB-UniRule"/>
</dbReference>
<dbReference type="CDD" id="cd00775">
    <property type="entry name" value="LysRS_core"/>
    <property type="match status" value="1"/>
</dbReference>
<dbReference type="CDD" id="cd04322">
    <property type="entry name" value="LysRS_N"/>
    <property type="match status" value="1"/>
</dbReference>
<dbReference type="FunFam" id="2.40.50.140:FF:000024">
    <property type="entry name" value="Lysine--tRNA ligase"/>
    <property type="match status" value="1"/>
</dbReference>
<dbReference type="FunFam" id="3.30.930.10:FF:000001">
    <property type="entry name" value="Lysine--tRNA ligase"/>
    <property type="match status" value="1"/>
</dbReference>
<dbReference type="Gene3D" id="3.30.930.10">
    <property type="entry name" value="Bira Bifunctional Protein, Domain 2"/>
    <property type="match status" value="1"/>
</dbReference>
<dbReference type="Gene3D" id="2.40.50.140">
    <property type="entry name" value="Nucleic acid-binding proteins"/>
    <property type="match status" value="1"/>
</dbReference>
<dbReference type="HAMAP" id="MF_00252">
    <property type="entry name" value="Lys_tRNA_synth_class2"/>
    <property type="match status" value="1"/>
</dbReference>
<dbReference type="InterPro" id="IPR004364">
    <property type="entry name" value="Aa-tRNA-synt_II"/>
</dbReference>
<dbReference type="InterPro" id="IPR006195">
    <property type="entry name" value="aa-tRNA-synth_II"/>
</dbReference>
<dbReference type="InterPro" id="IPR045864">
    <property type="entry name" value="aa-tRNA-synth_II/BPL/LPL"/>
</dbReference>
<dbReference type="InterPro" id="IPR002313">
    <property type="entry name" value="Lys-tRNA-ligase_II"/>
</dbReference>
<dbReference type="InterPro" id="IPR044136">
    <property type="entry name" value="Lys-tRNA-ligase_II_N"/>
</dbReference>
<dbReference type="InterPro" id="IPR018149">
    <property type="entry name" value="Lys-tRNA-synth_II_C"/>
</dbReference>
<dbReference type="InterPro" id="IPR012340">
    <property type="entry name" value="NA-bd_OB-fold"/>
</dbReference>
<dbReference type="InterPro" id="IPR004365">
    <property type="entry name" value="NA-bd_OB_tRNA"/>
</dbReference>
<dbReference type="NCBIfam" id="TIGR00499">
    <property type="entry name" value="lysS_bact"/>
    <property type="match status" value="1"/>
</dbReference>
<dbReference type="NCBIfam" id="NF001756">
    <property type="entry name" value="PRK00484.1"/>
    <property type="match status" value="1"/>
</dbReference>
<dbReference type="PANTHER" id="PTHR42918:SF15">
    <property type="entry name" value="LYSINE--TRNA LIGASE, CHLOROPLASTIC_MITOCHONDRIAL"/>
    <property type="match status" value="1"/>
</dbReference>
<dbReference type="PANTHER" id="PTHR42918">
    <property type="entry name" value="LYSYL-TRNA SYNTHETASE"/>
    <property type="match status" value="1"/>
</dbReference>
<dbReference type="Pfam" id="PF00152">
    <property type="entry name" value="tRNA-synt_2"/>
    <property type="match status" value="1"/>
</dbReference>
<dbReference type="Pfam" id="PF01336">
    <property type="entry name" value="tRNA_anti-codon"/>
    <property type="match status" value="1"/>
</dbReference>
<dbReference type="PRINTS" id="PR00982">
    <property type="entry name" value="TRNASYNTHLYS"/>
</dbReference>
<dbReference type="SUPFAM" id="SSF55681">
    <property type="entry name" value="Class II aaRS and biotin synthetases"/>
    <property type="match status" value="1"/>
</dbReference>
<dbReference type="SUPFAM" id="SSF50249">
    <property type="entry name" value="Nucleic acid-binding proteins"/>
    <property type="match status" value="1"/>
</dbReference>
<dbReference type="PROSITE" id="PS50862">
    <property type="entry name" value="AA_TRNA_LIGASE_II"/>
    <property type="match status" value="1"/>
</dbReference>
<protein>
    <recommendedName>
        <fullName evidence="1">Lysine--tRNA ligase</fullName>
        <ecNumber evidence="1">6.1.1.6</ecNumber>
    </recommendedName>
    <alternativeName>
        <fullName evidence="1">Lysyl-tRNA synthetase</fullName>
        <shortName evidence="1">LysRS</shortName>
    </alternativeName>
</protein>
<name>SYK_SHEAM</name>